<comment type="function">
    <text evidence="1">Involved in the high-affinity zinc uptake transport system.</text>
</comment>
<comment type="subcellular location">
    <subcellularLocation>
        <location evidence="3">Cell membrane</location>
        <topology evidence="3">Multi-pass membrane protein</topology>
    </subcellularLocation>
</comment>
<comment type="similarity">
    <text evidence="3">Belongs to the ABC-3 integral membrane protein family.</text>
</comment>
<accession>Q89AJ1</accession>
<organism>
    <name type="scientific">Buchnera aphidicola subsp. Baizongia pistaciae (strain Bp)</name>
    <dbReference type="NCBI Taxonomy" id="224915"/>
    <lineage>
        <taxon>Bacteria</taxon>
        <taxon>Pseudomonadati</taxon>
        <taxon>Pseudomonadota</taxon>
        <taxon>Gammaproteobacteria</taxon>
        <taxon>Enterobacterales</taxon>
        <taxon>Erwiniaceae</taxon>
        <taxon>Buchnera</taxon>
    </lineage>
</organism>
<name>ZNUB_BUCBP</name>
<feature type="chain" id="PRO_0000171160" description="High-affinity zinc uptake system membrane protein ZnuB">
    <location>
        <begin position="1"/>
        <end position="261"/>
    </location>
</feature>
<feature type="transmembrane region" description="Helical" evidence="2">
    <location>
        <begin position="5"/>
        <end position="27"/>
    </location>
</feature>
<feature type="transmembrane region" description="Helical" evidence="2">
    <location>
        <begin position="48"/>
        <end position="70"/>
    </location>
</feature>
<feature type="transmembrane region" description="Helical" evidence="2">
    <location>
        <begin position="85"/>
        <end position="107"/>
    </location>
</feature>
<feature type="transmembrane region" description="Helical" evidence="2">
    <location>
        <begin position="128"/>
        <end position="150"/>
    </location>
</feature>
<feature type="transmembrane region" description="Helical" evidence="2">
    <location>
        <begin position="172"/>
        <end position="194"/>
    </location>
</feature>
<feature type="transmembrane region" description="Helical" evidence="2">
    <location>
        <begin position="215"/>
        <end position="234"/>
    </location>
</feature>
<feature type="transmembrane region" description="Helical" evidence="2">
    <location>
        <begin position="238"/>
        <end position="257"/>
    </location>
</feature>
<dbReference type="EMBL" id="AE016826">
    <property type="protein sequence ID" value="AAO27019.1"/>
    <property type="molecule type" value="Genomic_DNA"/>
</dbReference>
<dbReference type="RefSeq" id="WP_011091420.1">
    <property type="nucleotide sequence ID" value="NC_004545.1"/>
</dbReference>
<dbReference type="SMR" id="Q89AJ1"/>
<dbReference type="STRING" id="224915.bbp_294"/>
<dbReference type="KEGG" id="bab:bbp_294"/>
<dbReference type="eggNOG" id="COG1108">
    <property type="taxonomic scope" value="Bacteria"/>
</dbReference>
<dbReference type="HOGENOM" id="CLU_028808_3_2_6"/>
<dbReference type="OrthoDB" id="9783937at2"/>
<dbReference type="Proteomes" id="UP000000601">
    <property type="component" value="Chromosome"/>
</dbReference>
<dbReference type="GO" id="GO:0043190">
    <property type="term" value="C:ATP-binding cassette (ABC) transporter complex"/>
    <property type="evidence" value="ECO:0007669"/>
    <property type="project" value="InterPro"/>
</dbReference>
<dbReference type="GO" id="GO:0010043">
    <property type="term" value="P:response to zinc ion"/>
    <property type="evidence" value="ECO:0007669"/>
    <property type="project" value="TreeGrafter"/>
</dbReference>
<dbReference type="GO" id="GO:0055085">
    <property type="term" value="P:transmembrane transport"/>
    <property type="evidence" value="ECO:0007669"/>
    <property type="project" value="InterPro"/>
</dbReference>
<dbReference type="GO" id="GO:0006829">
    <property type="term" value="P:zinc ion transport"/>
    <property type="evidence" value="ECO:0007669"/>
    <property type="project" value="UniProtKB-KW"/>
</dbReference>
<dbReference type="CDD" id="cd06550">
    <property type="entry name" value="TM_ABC_iron-siderophores_like"/>
    <property type="match status" value="1"/>
</dbReference>
<dbReference type="Gene3D" id="1.10.3470.10">
    <property type="entry name" value="ABC transporter involved in vitamin B12 uptake, BtuC"/>
    <property type="match status" value="1"/>
</dbReference>
<dbReference type="InterPro" id="IPR037294">
    <property type="entry name" value="ABC_BtuC-like"/>
</dbReference>
<dbReference type="InterPro" id="IPR001626">
    <property type="entry name" value="ABC_TroCD"/>
</dbReference>
<dbReference type="PANTHER" id="PTHR30477">
    <property type="entry name" value="ABC-TRANSPORTER METAL-BINDING PROTEIN"/>
    <property type="match status" value="1"/>
</dbReference>
<dbReference type="PANTHER" id="PTHR30477:SF23">
    <property type="entry name" value="HIGH-AFFINITY ZINC UPTAKE SYSTEM MEMBRANE PROTEIN ZNUB"/>
    <property type="match status" value="1"/>
</dbReference>
<dbReference type="Pfam" id="PF00950">
    <property type="entry name" value="ABC-3"/>
    <property type="match status" value="1"/>
</dbReference>
<dbReference type="SUPFAM" id="SSF81345">
    <property type="entry name" value="ABC transporter involved in vitamin B12 uptake, BtuC"/>
    <property type="match status" value="1"/>
</dbReference>
<evidence type="ECO:0000250" key="1"/>
<evidence type="ECO:0000255" key="2"/>
<evidence type="ECO:0000305" key="3"/>
<sequence>MYKTFFFGWLAGVLLTTITGPLGLFIIWRRMSSFGDTLSHSSLLGISFAVLLNIHPFFMVIITILLFGMLIIWLNYTTVLSLDTILGIIGYSFLSLGMIIINSISNFQKNKLTNYLFGNLLEVTYIDIVILIISCVSILFVLVWYWDLMLLTTINSDLAKIDGVNVLKINSILIFLITLTIGIAIKFIGSLIAISLLIIPAATAQRFSTSPEKMAFFSVIIGIISITWGILMSVYYNLAISPTIVFCSSIVFVISNLKKIL</sequence>
<gene>
    <name type="primary">znuB</name>
    <name type="ordered locus">bbp_294</name>
</gene>
<reference key="1">
    <citation type="journal article" date="2003" name="Proc. Natl. Acad. Sci. U.S.A.">
        <title>Reductive genome evolution in Buchnera aphidicola.</title>
        <authorList>
            <person name="van Ham R.C.H.J."/>
            <person name="Kamerbeek J."/>
            <person name="Palacios C."/>
            <person name="Rausell C."/>
            <person name="Abascal F."/>
            <person name="Bastolla U."/>
            <person name="Fernandez J.M."/>
            <person name="Jimenez L."/>
            <person name="Postigo M."/>
            <person name="Silva F.J."/>
            <person name="Tamames J."/>
            <person name="Viguera E."/>
            <person name="Latorre A."/>
            <person name="Valencia A."/>
            <person name="Moran F."/>
            <person name="Moya A."/>
        </authorList>
    </citation>
    <scope>NUCLEOTIDE SEQUENCE [LARGE SCALE GENOMIC DNA]</scope>
    <source>
        <strain>Bp</strain>
    </source>
</reference>
<keyword id="KW-1003">Cell membrane</keyword>
<keyword id="KW-0406">Ion transport</keyword>
<keyword id="KW-0472">Membrane</keyword>
<keyword id="KW-1185">Reference proteome</keyword>
<keyword id="KW-0812">Transmembrane</keyword>
<keyword id="KW-1133">Transmembrane helix</keyword>
<keyword id="KW-0813">Transport</keyword>
<keyword id="KW-0862">Zinc</keyword>
<keyword id="KW-0864">Zinc transport</keyword>
<protein>
    <recommendedName>
        <fullName>High-affinity zinc uptake system membrane protein ZnuB</fullName>
    </recommendedName>
</protein>
<proteinExistence type="inferred from homology"/>